<gene>
    <name type="primary">rev</name>
</gene>
<feature type="chain" id="PRO_0000085255" description="Protein Rev">
    <location>
        <begin position="1" status="less than"/>
        <end position="86"/>
    </location>
</feature>
<feature type="region of interest" description="Disordered" evidence="2">
    <location>
        <begin position="1"/>
        <end position="25"/>
    </location>
</feature>
<feature type="short sequence motif" description="Nuclear localization signal and RNA-binding (RRE)" evidence="1">
    <location>
        <begin position="8"/>
        <end position="24"/>
    </location>
</feature>
<feature type="short sequence motif" description="Nuclear export signal and binding to XPO1" evidence="1">
    <location>
        <begin position="47"/>
        <end position="58"/>
    </location>
</feature>
<feature type="compositionally biased region" description="Basic residues" evidence="2">
    <location>
        <begin position="10"/>
        <end position="24"/>
    </location>
</feature>
<feature type="modified residue" description="Phosphoserine; by host" evidence="1">
    <location>
        <position position="69"/>
    </location>
</feature>
<feature type="non-terminal residue">
    <location>
        <position position="1"/>
    </location>
</feature>
<evidence type="ECO:0000250" key="1"/>
<evidence type="ECO:0000256" key="2">
    <source>
        <dbReference type="SAM" id="MobiDB-lite"/>
    </source>
</evidence>
<sequence length="86" mass="9553">PPPNPEGTRQARKNRRRRWRRRQQQIRSISERILSTCLGRPAEPVHLQLPPLERLNLDCSKGTATGVGSTQIPGESCAVLGSGTKE</sequence>
<proteinExistence type="inferred from homology"/>
<name>REV_HV1Z3</name>
<organismHost>
    <name type="scientific">Homo sapiens</name>
    <name type="common">Human</name>
    <dbReference type="NCBI Taxonomy" id="9606"/>
</organismHost>
<keyword id="KW-0014">AIDS</keyword>
<keyword id="KW-1035">Host cytoplasm</keyword>
<keyword id="KW-1048">Host nucleus</keyword>
<keyword id="KW-0945">Host-virus interaction</keyword>
<keyword id="KW-0488">Methylation</keyword>
<keyword id="KW-0509">mRNA transport</keyword>
<keyword id="KW-0597">Phosphoprotein</keyword>
<keyword id="KW-0694">RNA-binding</keyword>
<keyword id="KW-0813">Transport</keyword>
<comment type="function">
    <text evidence="1">Escorts unspliced or incompletely spliced viral pre-mRNAs (late transcripts) out of the nucleus of infected cells. These pre-mRNAs carry a recognition sequence called Rev responsive element (RRE) located in the env gene, that is not present in fully spliced viral mRNAs (early transcripts). This function is essential since most viral proteins are translated from unspliced or partially spliced pre-mRNAs which cannot exit the nucleus by the pathway used by fully processed cellular mRNAs. Rev itself is translated from a fully spliced mRNA that readily exits the nucleus. Rev's nuclear localization signal (NLS) binds directly to KPNB1/Importin beta-1 without previous binding to KPNA1/Importin alpha-1. KPNB1 binds to the GDP bound form of RAN (Ran-GDP) and targets Rev to the nucleus. In the nucleus, the conversion from Ran-GDP to Ran-GTP dissociates Rev from KPNB1 and allows Rev's binding to the RRE in viral pre-mRNAs. Rev multimerization on the RRE via cooperative assembly exposes its nuclear export signal (NES) to the surface. Rev can then form a complex with XPO1/CRM1 and Ran-GTP, leading to nuclear export of the complex. Conversion from Ran-GTP to Ran-GDP mediates dissociation of the Rev/RRE/XPO1/RAN complex, so that Rev can return to the nucleus for a subsequent round of export. Beside KPNB1, also seems to interact with TNPO1/Transportin-1, RANBP5/IPO5 and IPO7/RANBP7 for nuclear import. The nucleoporin-like HRB/RIP is an essential cofactor that probably indirectly interacts with Rev to release HIV RNAs from the perinuclear region to the cytoplasm (By similarity).</text>
</comment>
<comment type="subunit">
    <text evidence="1">Homomultimer; when bound to the RRE. Multimeric assembly is essential for activity and may involve XPO1. Binds to human KPNB1, XPO1, TNPO1, RANBP5 and IPO7 (By similarity).</text>
</comment>
<comment type="subcellular location">
    <subcellularLocation>
        <location>Host nucleus</location>
        <location>Host nucleolus</location>
    </subcellularLocation>
    <subcellularLocation>
        <location>Host cytoplasm</location>
    </subcellularLocation>
    <text evidence="1">The presence of both nuclear import and nuclear export signals leads to continuous shuttling between the nucleus and cytoplasm.</text>
</comment>
<comment type="domain">
    <text evidence="1">The RNA-binding motif binds to the RRE, a 240 bp stem-and-loop structure present in incompletely spliced viral pre-mRNAs. This region also contains the NLS which mediates nuclear localization via KPNB1 binding and, when the N-terminal sequence is present, nucleolar targeting. These overlapping functions prevent Rev bound to RRE from undesirable return to the nucleus. When Rev binds the RRE, the NLS becomes masked while the NES remains accessible. The leucine-rich NES mediates binding to human XPO1 (By similarity).</text>
</comment>
<comment type="PTM">
    <text evidence="1">Phosphorylated by protein kinase CK2. Presence of, and maybe binding to the N-terminus of the regulatory beta subunit of CK2 is necessary for CK2-mediated Rev's phosphorylation (By similarity).</text>
</comment>
<comment type="PTM">
    <text evidence="1">Asymmetrically arginine dimethylated at one site by host PRMT6. Methylation impairs the RNA-binding activity and export of viral RNA from the nucleus to the cytoplasm (By similarity).</text>
</comment>
<comment type="miscellaneous">
    <text>HIV-1 lineages are divided in three main groups, M (for Major), O (for Outlier), and N (for New, or Non-M, Non-O). The vast majority of strains found worldwide belong to the group M. Group O seems to be endemic to and largely confined to Cameroon and neighboring countries in West Central Africa, where these viruses represent a small minority of HIV-1 strains. The group N is represented by a limited number of isolates from Cameroonian persons. The group M is further subdivided in 9 clades or subtypes (A to D, F to H, J and K).</text>
</comment>
<organism>
    <name type="scientific">Human immunodeficiency virus type 1 group M subtype U (isolate Z3)</name>
    <name type="common">HIV-1</name>
    <dbReference type="NCBI Taxonomy" id="11680"/>
    <lineage>
        <taxon>Viruses</taxon>
        <taxon>Riboviria</taxon>
        <taxon>Pararnavirae</taxon>
        <taxon>Artverviricota</taxon>
        <taxon>Revtraviricetes</taxon>
        <taxon>Ortervirales</taxon>
        <taxon>Retroviridae</taxon>
        <taxon>Orthoretrovirinae</taxon>
        <taxon>Lentivirus</taxon>
        <taxon>Human immunodeficiency virus type 1</taxon>
    </lineage>
</organism>
<dbReference type="EMBL" id="K03347">
    <property type="protein sequence ID" value="AAA45375.1"/>
    <property type="molecule type" value="Genomic_RNA"/>
</dbReference>
<dbReference type="GO" id="GO:0030430">
    <property type="term" value="C:host cell cytoplasm"/>
    <property type="evidence" value="ECO:0007669"/>
    <property type="project" value="UniProtKB-SubCell"/>
</dbReference>
<dbReference type="GO" id="GO:0044196">
    <property type="term" value="C:host cell nucleolus"/>
    <property type="evidence" value="ECO:0007669"/>
    <property type="project" value="UniProtKB-SubCell"/>
</dbReference>
<dbReference type="GO" id="GO:0003700">
    <property type="term" value="F:DNA-binding transcription factor activity"/>
    <property type="evidence" value="ECO:0007669"/>
    <property type="project" value="InterPro"/>
</dbReference>
<dbReference type="GO" id="GO:0003723">
    <property type="term" value="F:RNA binding"/>
    <property type="evidence" value="ECO:0007669"/>
    <property type="project" value="UniProtKB-KW"/>
</dbReference>
<dbReference type="GO" id="GO:0051028">
    <property type="term" value="P:mRNA transport"/>
    <property type="evidence" value="ECO:0007669"/>
    <property type="project" value="UniProtKB-KW"/>
</dbReference>
<dbReference type="Gene3D" id="6.10.140.630">
    <property type="match status" value="1"/>
</dbReference>
<dbReference type="InterPro" id="IPR000625">
    <property type="entry name" value="REV_protein"/>
</dbReference>
<dbReference type="Pfam" id="PF00424">
    <property type="entry name" value="REV"/>
    <property type="match status" value="1"/>
</dbReference>
<accession>P05867</accession>
<reference key="1">
    <citation type="journal article" date="1986" name="Proc. Natl. Acad. Sci. U.S.A.">
        <title>Identification of conserved and divergent domains within the envelope gene of the acquired immunodeficiency syndrome retrovirus.</title>
        <authorList>
            <person name="Willey R.W."/>
            <person name="Rutledge R.A."/>
            <person name="Dias S."/>
            <person name="Folks T."/>
            <person name="Theodore T."/>
            <person name="Buckler C.E."/>
            <person name="Martin M.A."/>
        </authorList>
    </citation>
    <scope>NUCLEOTIDE SEQUENCE [GENOMIC RNA]</scope>
</reference>
<reference key="2">
    <citation type="journal article" date="1999" name="Arch. Biochem. Biophys.">
        <title>The ins and outs of HIV Rev.</title>
        <authorList>
            <person name="Hope T.J."/>
        </authorList>
    </citation>
    <scope>REVIEW</scope>
</reference>
<protein>
    <recommendedName>
        <fullName>Protein Rev</fullName>
    </recommendedName>
    <alternativeName>
        <fullName>ART/TRS</fullName>
    </alternativeName>
    <alternativeName>
        <fullName>Anti-repression transactivator</fullName>
    </alternativeName>
    <alternativeName>
        <fullName>Regulator of expression of viral proteins</fullName>
    </alternativeName>
</protein>